<accession>Q1CIM6</accession>
<accession>C4GTC6</accession>
<dbReference type="EC" id="2.7.1.35" evidence="1"/>
<dbReference type="EMBL" id="CP000305">
    <property type="protein sequence ID" value="ABG18154.1"/>
    <property type="molecule type" value="Genomic_DNA"/>
</dbReference>
<dbReference type="EMBL" id="ACNQ01000010">
    <property type="protein sequence ID" value="EEO76727.1"/>
    <property type="molecule type" value="Genomic_DNA"/>
</dbReference>
<dbReference type="RefSeq" id="WP_002210961.1">
    <property type="nucleotide sequence ID" value="NZ_ACNQ01000010.1"/>
</dbReference>
<dbReference type="SMR" id="Q1CIM6"/>
<dbReference type="GeneID" id="57976307"/>
<dbReference type="KEGG" id="ypn:YPN_1825"/>
<dbReference type="HOGENOM" id="CLU_046496_3_0_6"/>
<dbReference type="UniPathway" id="UPA01068">
    <property type="reaction ID" value="UER00298"/>
</dbReference>
<dbReference type="Proteomes" id="UP000008936">
    <property type="component" value="Chromosome"/>
</dbReference>
<dbReference type="GO" id="GO:0005829">
    <property type="term" value="C:cytosol"/>
    <property type="evidence" value="ECO:0007669"/>
    <property type="project" value="TreeGrafter"/>
</dbReference>
<dbReference type="GO" id="GO:0005524">
    <property type="term" value="F:ATP binding"/>
    <property type="evidence" value="ECO:0007669"/>
    <property type="project" value="UniProtKB-UniRule"/>
</dbReference>
<dbReference type="GO" id="GO:0000287">
    <property type="term" value="F:magnesium ion binding"/>
    <property type="evidence" value="ECO:0007669"/>
    <property type="project" value="UniProtKB-UniRule"/>
</dbReference>
<dbReference type="GO" id="GO:0008478">
    <property type="term" value="F:pyridoxal kinase activity"/>
    <property type="evidence" value="ECO:0007669"/>
    <property type="project" value="UniProtKB-UniRule"/>
</dbReference>
<dbReference type="GO" id="GO:0009443">
    <property type="term" value="P:pyridoxal 5'-phosphate salvage"/>
    <property type="evidence" value="ECO:0007669"/>
    <property type="project" value="UniProtKB-UniRule"/>
</dbReference>
<dbReference type="CDD" id="cd01173">
    <property type="entry name" value="pyridoxal_pyridoxamine_kinase"/>
    <property type="match status" value="1"/>
</dbReference>
<dbReference type="FunFam" id="3.40.1190.20:FF:000008">
    <property type="entry name" value="Pyridoxal kinase PdxY"/>
    <property type="match status" value="1"/>
</dbReference>
<dbReference type="Gene3D" id="3.40.1190.20">
    <property type="match status" value="1"/>
</dbReference>
<dbReference type="HAMAP" id="MF_01639">
    <property type="entry name" value="PdxY"/>
    <property type="match status" value="1"/>
</dbReference>
<dbReference type="InterPro" id="IPR013749">
    <property type="entry name" value="PM/HMP-P_kinase-1"/>
</dbReference>
<dbReference type="InterPro" id="IPR004625">
    <property type="entry name" value="PyrdxlKinase"/>
</dbReference>
<dbReference type="InterPro" id="IPR023685">
    <property type="entry name" value="Pyridoxal_kinase_PdxY"/>
</dbReference>
<dbReference type="InterPro" id="IPR029056">
    <property type="entry name" value="Ribokinase-like"/>
</dbReference>
<dbReference type="NCBIfam" id="NF004398">
    <property type="entry name" value="PRK05756.1"/>
    <property type="match status" value="1"/>
</dbReference>
<dbReference type="NCBIfam" id="TIGR00687">
    <property type="entry name" value="pyridox_kin"/>
    <property type="match status" value="1"/>
</dbReference>
<dbReference type="PANTHER" id="PTHR10534">
    <property type="entry name" value="PYRIDOXAL KINASE"/>
    <property type="match status" value="1"/>
</dbReference>
<dbReference type="PANTHER" id="PTHR10534:SF2">
    <property type="entry name" value="PYRIDOXAL KINASE"/>
    <property type="match status" value="1"/>
</dbReference>
<dbReference type="Pfam" id="PF08543">
    <property type="entry name" value="Phos_pyr_kin"/>
    <property type="match status" value="1"/>
</dbReference>
<dbReference type="SUPFAM" id="SSF53613">
    <property type="entry name" value="Ribokinase-like"/>
    <property type="match status" value="1"/>
</dbReference>
<protein>
    <recommendedName>
        <fullName evidence="1">Pyridoxal kinase PdxY</fullName>
        <shortName evidence="1">PL kinase</shortName>
        <ecNumber evidence="1">2.7.1.35</ecNumber>
    </recommendedName>
</protein>
<keyword id="KW-0067">ATP-binding</keyword>
<keyword id="KW-0418">Kinase</keyword>
<keyword id="KW-0460">Magnesium</keyword>
<keyword id="KW-0547">Nucleotide-binding</keyword>
<keyword id="KW-0808">Transferase</keyword>
<sequence>MKNILSIQSHVVFGHAGNSAAEFPMRRMGVNVWPLNTVQFSNHTQYGHWTGCVMPASHLTDIVQGIADIDRLKDCDAVLSGYIGSPEQGSHILAAVAQVKQANPDAWYFCDPVMGHPEKGCIVAPGVAEFFCNEALPASDMIAPNLLELEQLSGERVENVEQAVQVARSLCARGPKVVLVKHLSRAGYHADCFEMLLVTADDAWHICRPLVDFGKRQPVGVGDLTSGLLLVNLLKGEPLDKALEHVTAAVYEVMLKTQEMGEYELQVVAAQETIVTPICQFTAVRL</sequence>
<reference key="1">
    <citation type="journal article" date="2006" name="J. Bacteriol.">
        <title>Complete genome sequence of Yersinia pestis strains Antiqua and Nepal516: evidence of gene reduction in an emerging pathogen.</title>
        <authorList>
            <person name="Chain P.S.G."/>
            <person name="Hu P."/>
            <person name="Malfatti S.A."/>
            <person name="Radnedge L."/>
            <person name="Larimer F."/>
            <person name="Vergez L.M."/>
            <person name="Worsham P."/>
            <person name="Chu M.C."/>
            <person name="Andersen G.L."/>
        </authorList>
    </citation>
    <scope>NUCLEOTIDE SEQUENCE [LARGE SCALE GENOMIC DNA]</scope>
    <source>
        <strain>Nepal516</strain>
    </source>
</reference>
<reference key="2">
    <citation type="submission" date="2009-04" db="EMBL/GenBank/DDBJ databases">
        <title>Yersinia pestis Nepal516A whole genome shotgun sequencing project.</title>
        <authorList>
            <person name="Plunkett G. III"/>
            <person name="Anderson B.D."/>
            <person name="Baumler D.J."/>
            <person name="Burland V."/>
            <person name="Cabot E.L."/>
            <person name="Glasner J.D."/>
            <person name="Mau B."/>
            <person name="Neeno-Eckwall E."/>
            <person name="Perna N.T."/>
            <person name="Munk A.C."/>
            <person name="Tapia R."/>
            <person name="Green L.D."/>
            <person name="Rogers Y.C."/>
            <person name="Detter J.C."/>
            <person name="Bruce D.C."/>
            <person name="Brettin T.S."/>
        </authorList>
    </citation>
    <scope>NUCLEOTIDE SEQUENCE [LARGE SCALE GENOMIC DNA]</scope>
    <source>
        <strain>Nepal516</strain>
    </source>
</reference>
<proteinExistence type="inferred from homology"/>
<organism>
    <name type="scientific">Yersinia pestis bv. Antiqua (strain Nepal516)</name>
    <dbReference type="NCBI Taxonomy" id="377628"/>
    <lineage>
        <taxon>Bacteria</taxon>
        <taxon>Pseudomonadati</taxon>
        <taxon>Pseudomonadota</taxon>
        <taxon>Gammaproteobacteria</taxon>
        <taxon>Enterobacterales</taxon>
        <taxon>Yersiniaceae</taxon>
        <taxon>Yersinia</taxon>
    </lineage>
</organism>
<gene>
    <name evidence="1" type="primary">pdxY</name>
    <name type="ordered locus">YPN_1825</name>
    <name type="ORF">YP516_2027</name>
</gene>
<comment type="function">
    <text evidence="1">Pyridoxal kinase involved in the salvage pathway of pyridoxal 5'-phosphate (PLP). Catalyzes the phosphorylation of pyridoxal to PLP.</text>
</comment>
<comment type="catalytic activity">
    <reaction evidence="1">
        <text>pyridoxal + ATP = pyridoxal 5'-phosphate + ADP + H(+)</text>
        <dbReference type="Rhea" id="RHEA:10224"/>
        <dbReference type="ChEBI" id="CHEBI:15378"/>
        <dbReference type="ChEBI" id="CHEBI:17310"/>
        <dbReference type="ChEBI" id="CHEBI:30616"/>
        <dbReference type="ChEBI" id="CHEBI:456216"/>
        <dbReference type="ChEBI" id="CHEBI:597326"/>
        <dbReference type="EC" id="2.7.1.35"/>
    </reaction>
</comment>
<comment type="cofactor">
    <cofactor evidence="1">
        <name>Mg(2+)</name>
        <dbReference type="ChEBI" id="CHEBI:18420"/>
    </cofactor>
</comment>
<comment type="pathway">
    <text evidence="1">Cofactor metabolism; pyridoxal 5'-phosphate salvage; pyridoxal 5'-phosphate from pyridoxal: step 1/1.</text>
</comment>
<comment type="subunit">
    <text evidence="1">Homodimer.</text>
</comment>
<comment type="similarity">
    <text evidence="1">Belongs to the pyridoxine kinase family. PdxY subfamily.</text>
</comment>
<name>PDXY_YERPN</name>
<feature type="chain" id="PRO_0000269840" description="Pyridoxal kinase PdxY">
    <location>
        <begin position="1"/>
        <end position="286"/>
    </location>
</feature>
<feature type="binding site" evidence="1">
    <location>
        <position position="9"/>
    </location>
    <ligand>
        <name>substrate</name>
    </ligand>
</feature>
<feature type="binding site" evidence="1">
    <location>
        <begin position="44"/>
        <end position="45"/>
    </location>
    <ligand>
        <name>substrate</name>
    </ligand>
</feature>
<feature type="binding site" evidence="1">
    <location>
        <position position="111"/>
    </location>
    <ligand>
        <name>ATP</name>
        <dbReference type="ChEBI" id="CHEBI:30616"/>
    </ligand>
</feature>
<feature type="binding site" evidence="1">
    <location>
        <position position="143"/>
    </location>
    <ligand>
        <name>ATP</name>
        <dbReference type="ChEBI" id="CHEBI:30616"/>
    </ligand>
</feature>
<feature type="binding site" evidence="1">
    <location>
        <position position="148"/>
    </location>
    <ligand>
        <name>ATP</name>
        <dbReference type="ChEBI" id="CHEBI:30616"/>
    </ligand>
</feature>
<feature type="binding site" evidence="1">
    <location>
        <position position="181"/>
    </location>
    <ligand>
        <name>ATP</name>
        <dbReference type="ChEBI" id="CHEBI:30616"/>
    </ligand>
</feature>
<feature type="binding site" evidence="1">
    <location>
        <begin position="208"/>
        <end position="211"/>
    </location>
    <ligand>
        <name>ATP</name>
        <dbReference type="ChEBI" id="CHEBI:30616"/>
    </ligand>
</feature>
<feature type="binding site" evidence="1">
    <location>
        <position position="223"/>
    </location>
    <ligand>
        <name>substrate</name>
    </ligand>
</feature>
<evidence type="ECO:0000255" key="1">
    <source>
        <dbReference type="HAMAP-Rule" id="MF_01639"/>
    </source>
</evidence>